<gene>
    <name type="primary">gyrB</name>
</gene>
<keyword id="KW-0067">ATP-binding</keyword>
<keyword id="KW-0963">Cytoplasm</keyword>
<keyword id="KW-0238">DNA-binding</keyword>
<keyword id="KW-0413">Isomerase</keyword>
<keyword id="KW-0547">Nucleotide-binding</keyword>
<keyword id="KW-0799">Topoisomerase</keyword>
<reference key="1">
    <citation type="journal article" date="1996" name="Int. J. Syst. Bacteriol.">
        <title>Phylogenetic analysis of Acinetobacter strains based on the nucleotide sequences of gyrB genes and on the amino acid sequences of their products.</title>
        <authorList>
            <person name="Yamamoto S."/>
            <person name="Harayama S."/>
        </authorList>
    </citation>
    <scope>NUCLEOTIDE SEQUENCE [GENOMIC DNA]</scope>
</reference>
<accession>Q44277</accession>
<accession>Q60168</accession>
<evidence type="ECO:0000250" key="1">
    <source>
        <dbReference type="UniProtKB" id="P0AES6"/>
    </source>
</evidence>
<evidence type="ECO:0000255" key="2">
    <source>
        <dbReference type="PROSITE-ProRule" id="PRU00995"/>
    </source>
</evidence>
<evidence type="ECO:0000305" key="3"/>
<dbReference type="EC" id="5.6.2.2" evidence="2"/>
<dbReference type="EMBL" id="D73440">
    <property type="protein sequence ID" value="BAA11165.1"/>
    <property type="molecule type" value="Genomic_DNA"/>
</dbReference>
<dbReference type="EMBL" id="D73425">
    <property type="protein sequence ID" value="BAA11150.1"/>
    <property type="molecule type" value="Genomic_DNA"/>
</dbReference>
<dbReference type="SMR" id="Q44277"/>
<dbReference type="eggNOG" id="COG0187">
    <property type="taxonomic scope" value="Bacteria"/>
</dbReference>
<dbReference type="GO" id="GO:0005737">
    <property type="term" value="C:cytoplasm"/>
    <property type="evidence" value="ECO:0007669"/>
    <property type="project" value="UniProtKB-SubCell"/>
</dbReference>
<dbReference type="GO" id="GO:0005524">
    <property type="term" value="F:ATP binding"/>
    <property type="evidence" value="ECO:0007669"/>
    <property type="project" value="UniProtKB-KW"/>
</dbReference>
<dbReference type="GO" id="GO:0003677">
    <property type="term" value="F:DNA binding"/>
    <property type="evidence" value="ECO:0007669"/>
    <property type="project" value="UniProtKB-KW"/>
</dbReference>
<dbReference type="GO" id="GO:0003918">
    <property type="term" value="F:DNA topoisomerase type II (double strand cut, ATP-hydrolyzing) activity"/>
    <property type="evidence" value="ECO:0007669"/>
    <property type="project" value="UniProtKB-EC"/>
</dbReference>
<dbReference type="GO" id="GO:0006265">
    <property type="term" value="P:DNA topological change"/>
    <property type="evidence" value="ECO:0007669"/>
    <property type="project" value="InterPro"/>
</dbReference>
<dbReference type="Gene3D" id="3.40.50.670">
    <property type="match status" value="1"/>
</dbReference>
<dbReference type="Gene3D" id="3.30.565.10">
    <property type="entry name" value="Histidine kinase-like ATPase, C-terminal domain"/>
    <property type="match status" value="1"/>
</dbReference>
<dbReference type="InterPro" id="IPR036890">
    <property type="entry name" value="HATPase_C_sf"/>
</dbReference>
<dbReference type="InterPro" id="IPR001241">
    <property type="entry name" value="Topo_IIA"/>
</dbReference>
<dbReference type="InterPro" id="IPR013760">
    <property type="entry name" value="Topo_IIA-like_dom_sf"/>
</dbReference>
<dbReference type="InterPro" id="IPR000565">
    <property type="entry name" value="Topo_IIA_B"/>
</dbReference>
<dbReference type="InterPro" id="IPR013759">
    <property type="entry name" value="Topo_IIA_B_C"/>
</dbReference>
<dbReference type="InterPro" id="IPR018522">
    <property type="entry name" value="TopoIIA_CS"/>
</dbReference>
<dbReference type="InterPro" id="IPR006171">
    <property type="entry name" value="TOPRIM_dom"/>
</dbReference>
<dbReference type="PANTHER" id="PTHR45866:SF1">
    <property type="entry name" value="DNA GYRASE SUBUNIT B, MITOCHONDRIAL"/>
    <property type="match status" value="1"/>
</dbReference>
<dbReference type="PANTHER" id="PTHR45866">
    <property type="entry name" value="DNA GYRASE/TOPOISOMERASE SUBUNIT B"/>
    <property type="match status" value="1"/>
</dbReference>
<dbReference type="Pfam" id="PF01751">
    <property type="entry name" value="Toprim"/>
    <property type="match status" value="1"/>
</dbReference>
<dbReference type="PRINTS" id="PR01159">
    <property type="entry name" value="DNAGYRASEB"/>
</dbReference>
<dbReference type="SMART" id="SM00433">
    <property type="entry name" value="TOP2c"/>
    <property type="match status" value="1"/>
</dbReference>
<dbReference type="SUPFAM" id="SSF55874">
    <property type="entry name" value="ATPase domain of HSP90 chaperone/DNA topoisomerase II/histidine kinase"/>
    <property type="match status" value="1"/>
</dbReference>
<dbReference type="SUPFAM" id="SSF56719">
    <property type="entry name" value="Type II DNA topoisomerase"/>
    <property type="match status" value="1"/>
</dbReference>
<dbReference type="PROSITE" id="PS00177">
    <property type="entry name" value="TOPOISOMERASE_II"/>
    <property type="match status" value="1"/>
</dbReference>
<dbReference type="PROSITE" id="PS50880">
    <property type="entry name" value="TOPRIM"/>
    <property type="match status" value="1"/>
</dbReference>
<name>GYRB_ACIVR</name>
<comment type="function">
    <text evidence="1">A type II topoisomerase that negatively supercoils closed circular double-stranded (ds) DNA in an ATP-dependent manner to modulate DNA topology and maintain chromosomes in an underwound state. Negative supercoiling favors strand separation, and DNA replication, transcription, recombination and repair, all of which involve strand separation. Also able to catalyze the interconversion of other topological isomers of dsDNA rings, including catenanes and knotted rings. Type II topoisomerases break and join 2 DNA strands simultaneously in an ATP-dependent manner.</text>
</comment>
<comment type="catalytic activity">
    <reaction evidence="2">
        <text>ATP-dependent breakage, passage and rejoining of double-stranded DNA.</text>
        <dbReference type="EC" id="5.6.2.2"/>
    </reaction>
</comment>
<comment type="subunit">
    <text evidence="1">Heterotetramer, composed of two GyrA and two GyrB chains. In the heterotetramer, GyrA contains the active site tyrosine that forms a transient covalent intermediate with DNA, while GyrB binds cofactors and catalyzes ATP hydrolysis.</text>
</comment>
<comment type="subcellular location">
    <subcellularLocation>
        <location evidence="1">Cytoplasm</location>
    </subcellularLocation>
</comment>
<comment type="miscellaneous">
    <text evidence="1">Few gyrases are as efficient as E.coli at forming negative supercoils. Not all organisms have 2 type II topoisomerases; in organisms with a single type II topoisomerase this enzyme also has to decatenate newly replicated chromosomes.</text>
</comment>
<comment type="similarity">
    <text evidence="3">Belongs to the type II topoisomerase GyrB family.</text>
</comment>
<sequence length="216" mass="23872">SYKVSGGLHGVGVSVVNALSKKLHLTIHRAGQIHEQEYAHGDPQYPLKVVGETDTSGTTVRFWPSELTFSQTIFSVDILARRLRELSFLNAGVRIVLRDERVNLEHIYDYEVGLSEKSALDIAGLPGKLADCQEKDPALSELYLVEGDSAGGSAKQGRNRKMQAILPLKGKILNVERARFDKMISSQEVGTLITALGCGIGREEYNPDKLRYHKII</sequence>
<organism>
    <name type="scientific">Acinetobacter venetianus (strain ATCC 31012 / DSM 23050 / BCRC 14357 / CCUG 45561 / CIP 110063 / KCTC 2702 / LMG 19082 / RAG-1)</name>
    <dbReference type="NCBI Taxonomy" id="1191460"/>
    <lineage>
        <taxon>Bacteria</taxon>
        <taxon>Pseudomonadati</taxon>
        <taxon>Pseudomonadota</taxon>
        <taxon>Gammaproteobacteria</taxon>
        <taxon>Moraxellales</taxon>
        <taxon>Moraxellaceae</taxon>
        <taxon>Acinetobacter</taxon>
    </lineage>
</organism>
<proteinExistence type="inferred from homology"/>
<protein>
    <recommendedName>
        <fullName>DNA gyrase subunit B</fullName>
        <ecNumber evidence="2">5.6.2.2</ecNumber>
    </recommendedName>
</protein>
<feature type="chain" id="PRO_0000145285" description="DNA gyrase subunit B">
    <location>
        <begin position="1" status="less than"/>
        <end position="216" status="greater than"/>
    </location>
</feature>
<feature type="domain" description="Toprim" evidence="2">
    <location>
        <begin position="140"/>
        <end position="216" status="greater than"/>
    </location>
</feature>
<feature type="site" description="Interaction with DNA" evidence="2">
    <location>
        <position position="171"/>
    </location>
</feature>
<feature type="site" description="Interaction with DNA" evidence="2">
    <location>
        <position position="174"/>
    </location>
</feature>
<feature type="non-consecutive residues" evidence="3">
    <location>
        <begin position="116"/>
        <end position="117"/>
    </location>
</feature>
<feature type="non-terminal residue">
    <location>
        <position position="1"/>
    </location>
</feature>
<feature type="non-terminal residue">
    <location>
        <position position="216"/>
    </location>
</feature>